<organismHost>
    <name type="scientific">Homo sapiens</name>
    <name type="common">Human</name>
    <dbReference type="NCBI Taxonomy" id="9606"/>
</organismHost>
<gene>
    <name type="primary">OPG085</name>
    <name type="ordered locus">MVA070L</name>
    <name type="ordered locus">ACAM3000_MVA_070</name>
</gene>
<keyword id="KW-0378">Hydrolase</keyword>
<keyword id="KW-0426">Late protein</keyword>
<keyword id="KW-0479">Metal-binding</keyword>
<keyword id="KW-0482">Metalloprotease</keyword>
<keyword id="KW-0645">Protease</keyword>
<keyword id="KW-0946">Virion</keyword>
<keyword id="KW-0862">Zinc</keyword>
<proteinExistence type="inferred from homology"/>
<protein>
    <recommendedName>
        <fullName>Metalloendopeptidase OPG085</fullName>
        <ecNumber evidence="1">3.4.24.-</ecNumber>
    </recommendedName>
    <alternativeName>
        <fullName>Metalloendopeptidase G1</fullName>
    </alternativeName>
</protein>
<feature type="chain" id="PRO_0000218443" description="Metalloendopeptidase OPG085">
    <location>
        <begin position="1"/>
        <end position="591"/>
    </location>
</feature>
<feature type="active site" evidence="2">
    <location>
        <position position="44"/>
    </location>
</feature>
<feature type="binding site" evidence="2">
    <location>
        <position position="41"/>
    </location>
    <ligand>
        <name>Zn(2+)</name>
        <dbReference type="ChEBI" id="CHEBI:29105"/>
        <note>catalytic</note>
    </ligand>
</feature>
<feature type="binding site" evidence="2">
    <location>
        <position position="45"/>
    </location>
    <ligand>
        <name>Zn(2+)</name>
        <dbReference type="ChEBI" id="CHEBI:29105"/>
        <note>catalytic</note>
    </ligand>
</feature>
<evidence type="ECO:0000250" key="1">
    <source>
        <dbReference type="UniProtKB" id="P16713"/>
    </source>
</evidence>
<evidence type="ECO:0000255" key="2"/>
<evidence type="ECO:0000305" key="3"/>
<organism>
    <name type="scientific">Vaccinia virus (strain Ankara)</name>
    <name type="common">VACV</name>
    <dbReference type="NCBI Taxonomy" id="126794"/>
    <lineage>
        <taxon>Viruses</taxon>
        <taxon>Varidnaviria</taxon>
        <taxon>Bamfordvirae</taxon>
        <taxon>Nucleocytoviricota</taxon>
        <taxon>Pokkesviricetes</taxon>
        <taxon>Chitovirales</taxon>
        <taxon>Poxviridae</taxon>
        <taxon>Chordopoxvirinae</taxon>
        <taxon>Orthopoxvirus</taxon>
        <taxon>Vaccinia virus</taxon>
    </lineage>
</organism>
<sequence length="591" mass="67980">MIVLPNKVRIFINDRMKKDIYLGISNFGFENDIDEILGIAHLLEHLLISFDSTNFLANASTSRSYMSFWCKSINSATESDAIRTLVSWFFSNGKLKDNFSLSSIRFHIKELENEYYFRNEVFHCMDILTFLSGGDLYNGGRIDMIDNLNIVRDMLVNRMQRISGSNIVIFVKRLGPGTLDFFKQTFGSLPACPEIIPSSIPVSTNGKIVMTPSPFYTVMVKINPTLDNILGILYLYETYHLIDYETIGNQLYLTVSFIDETEYESFLRGEAILQISQCQRINMNYSDDYMMNIYLNFPWLSHDLYDYITRINDDSKSILISLTNEIYASIINRDIIVIYPNFSKAMCNTRDTQQHPIVVLDATNDGLIKKPYRSIPLMKRLTSNEIFIRYGDASLMDMITLSLSKQDISLKRNAEGIRVKHSFSADDIQAIMESDSFLKYSRSKPAAMYQYIFLSFFASGNSIDDILANRDSTLEFSKRTKSKILFGRNTRYDVTAKSSFVCGIVRGKSLDKTSLVEMMWDLKKKGLIYSMEFTNLLSKNTFYLFTFTIYTDEVYDYLNTNKLFSAKCLVVSTKGDVENFSSLKKDVVIRV</sequence>
<dbReference type="EC" id="3.4.24.-" evidence="1"/>
<dbReference type="EMBL" id="U94848">
    <property type="protein sequence ID" value="AAB96440.1"/>
    <property type="molecule type" value="Genomic_DNA"/>
</dbReference>
<dbReference type="EMBL" id="AY603355">
    <property type="protein sequence ID" value="AAT10468.1"/>
    <property type="molecule type" value="Genomic_DNA"/>
</dbReference>
<dbReference type="PIR" id="T37346">
    <property type="entry name" value="T37346"/>
</dbReference>
<dbReference type="SMR" id="P68492"/>
<dbReference type="MEROPS" id="M44.001"/>
<dbReference type="Proteomes" id="UP000159908">
    <property type="component" value="Segment"/>
</dbReference>
<dbReference type="Proteomes" id="UP000172909">
    <property type="component" value="Segment"/>
</dbReference>
<dbReference type="GO" id="GO:0044423">
    <property type="term" value="C:virion component"/>
    <property type="evidence" value="ECO:0007669"/>
    <property type="project" value="UniProtKB-KW"/>
</dbReference>
<dbReference type="GO" id="GO:0004222">
    <property type="term" value="F:metalloendopeptidase activity"/>
    <property type="evidence" value="ECO:0007669"/>
    <property type="project" value="InterPro"/>
</dbReference>
<dbReference type="GO" id="GO:0008270">
    <property type="term" value="F:zinc ion binding"/>
    <property type="evidence" value="ECO:0007669"/>
    <property type="project" value="InterPro"/>
</dbReference>
<dbReference type="GO" id="GO:0006508">
    <property type="term" value="P:proteolysis"/>
    <property type="evidence" value="ECO:0007669"/>
    <property type="project" value="UniProtKB-KW"/>
</dbReference>
<dbReference type="GO" id="GO:0019058">
    <property type="term" value="P:viral life cycle"/>
    <property type="evidence" value="ECO:0007669"/>
    <property type="project" value="InterPro"/>
</dbReference>
<dbReference type="InterPro" id="IPR011249">
    <property type="entry name" value="Metalloenz_LuxS/M16"/>
</dbReference>
<dbReference type="InterPro" id="IPR005072">
    <property type="entry name" value="Peptidase_M44"/>
</dbReference>
<dbReference type="Pfam" id="PF03410">
    <property type="entry name" value="Peptidase_M44"/>
    <property type="match status" value="1"/>
</dbReference>
<dbReference type="PIRSF" id="PIRSF015679">
    <property type="entry name" value="Peptidase_M44"/>
    <property type="match status" value="1"/>
</dbReference>
<dbReference type="SUPFAM" id="SSF63411">
    <property type="entry name" value="LuxS/MPP-like metallohydrolase"/>
    <property type="match status" value="1"/>
</dbReference>
<reference key="1">
    <citation type="journal article" date="1998" name="Virology">
        <title>The complete genomic sequence of the modified vaccinia Ankara strain: comparison with other orthopoxviruses.</title>
        <authorList>
            <person name="Antoine G."/>
            <person name="Scheiflinger F."/>
            <person name="Dorner F."/>
            <person name="Falkner F.G."/>
        </authorList>
    </citation>
    <scope>NUCLEOTIDE SEQUENCE [LARGE SCALE GENOMIC DNA]</scope>
</reference>
<reference key="2">
    <citation type="submission" date="2004-04" db="EMBL/GenBank/DDBJ databases">
        <authorList>
            <person name="Esposito J.J."/>
            <person name="Frace M."/>
            <person name="Sammons S.A."/>
            <person name="Olsen-Rasmussen M.S."/>
            <person name="Osborne J."/>
            <person name="Khristova M."/>
            <person name="Wohlhueter R.M."/>
        </authorList>
    </citation>
    <scope>NUCLEOTIDE SEQUENCE [LARGE SCALE GENOMIC DNA]</scope>
    <source>
        <strain>Isolate Acambis 3000</strain>
    </source>
</reference>
<accession>P68492</accession>
<accession>O57194</accession>
<accession>Q6J3G0</accession>
<name>PG085_VACCA</name>
<comment type="function">
    <text evidence="1">Probably involved in maturation of some viral proteins by processing them preferentially at Ala-Gly-|-Ser/Thr/Lys motifs. Does not seem to be responsible for the cleavage of major core proteins.</text>
</comment>
<comment type="cofactor">
    <cofactor evidence="1">
        <name>Zn(2+)</name>
        <dbReference type="ChEBI" id="CHEBI:29105"/>
    </cofactor>
    <text evidence="1">Binds 1 zinc ion.</text>
</comment>
<comment type="subcellular location">
    <subcellularLocation>
        <location evidence="1">Virion</location>
    </subcellularLocation>
    <text evidence="1">Localizes to the virion core.</text>
</comment>
<comment type="PTM">
    <text evidence="1">Undergoes proteolytic processing during the course of infection. May be cleaved into 46 kDa and 22 kDa products (Potential).</text>
</comment>
<comment type="similarity">
    <text evidence="3">Belongs to the peptidase M44 family.</text>
</comment>